<name>BRE1A_CHICK</name>
<gene>
    <name type="primary">RNF20</name>
    <name type="synonym">BRE1A</name>
    <name type="ORF">RCJMB04_5a23</name>
</gene>
<evidence type="ECO:0000250" key="1">
    <source>
        <dbReference type="UniProtKB" id="Q5VTR2"/>
    </source>
</evidence>
<evidence type="ECO:0000255" key="2"/>
<evidence type="ECO:0000255" key="3">
    <source>
        <dbReference type="PROSITE-ProRule" id="PRU00175"/>
    </source>
</evidence>
<evidence type="ECO:0000256" key="4">
    <source>
        <dbReference type="SAM" id="MobiDB-lite"/>
    </source>
</evidence>
<evidence type="ECO:0000305" key="5"/>
<sequence length="984" mass="114808">MSGAGNKRAAGEPGPSAPPEKKAGVEDSGTTVETIKLGGVSSTEELDIRTLQTKNRKLAEMLDQRQAIEDELREHIEKLERRQATDDASLLIINRYWNQFDENIRIILKRFDLDQGLGDLLSERKALVVPEPEPDSDSNQERKDERERGEGLEPAFSFLATLASSTSEEIESQLQERVESSRRAVAQIVTMYDKLQEKVDVLSHKLNSGDISLMEEAVLELNSYLSHENGRLQELADTLQEKHRIMSQEFSKLQEKVETAESRVSVLETMIDDLQWNIDKIRKREQRLNRHLADVLERVNSKGYKVYGAGSSLYGGTITINARKFEEMNAELEENKELAGNRLNELEELRHDLQEVTTQNEKLKVELRRAVEEAVKETPEYRCMQSQFSVLYNESLQLKAHLDEARTLLHGTRTTHQRQVELIERDEVSLHKKLRTEVMQLEDTLAQVRKEYEMLRIEFEQTLAANEQAGPINREMRHLISSLQNHNHQLKGEVLRYKRKLREAQSDLSKIRSRSGSALLQSQSSTEDTKEEPPEIKQEPDDPSSQVSAPRAASEEASEVKARRDEEERERERREREREREKEKEKEREREKEKEKEKEREREKQKQKESEKERESKEKEKGKHEDGRKKEAEVIKQLKAELKKAQESQKEMKLLLDMYRSAPKEQRDKVQLMAAEKKAKAELEELRQRVKELEDKEKKESKKMADEDALRKIRAVEEQIEYLQKKLAMAKQEEEALLSEMDVTGQAFEDMQEQNIRLMQQLREKDDANFKLMSERIKSNQIHKLLKEEKEELADQVLTLKTQVDAQLQVVRKLEEKEHLLQSSIGTGEKELGLRTQALEMNKRKAMDAAQLADDLKTQLELAQKKLHDFQDEIVESRVTREKEMFNFKRAEEDISRLRRKLETTKKPDMVPNCDEILMEEIKDYKARLTCPCCNMRKKDAVLTKCFHVFCFECVKTRYDTRQRKCPKCNAAFGANDFHRIYIG</sequence>
<proteinExistence type="evidence at transcript level"/>
<accession>Q5ZLS3</accession>
<dbReference type="EC" id="2.3.2.27" evidence="1"/>
<dbReference type="EMBL" id="AJ719661">
    <property type="protein sequence ID" value="CAG31320.1"/>
    <property type="molecule type" value="mRNA"/>
</dbReference>
<dbReference type="RefSeq" id="NP_001026605.1">
    <property type="nucleotide sequence ID" value="NM_001031434.1"/>
</dbReference>
<dbReference type="SMR" id="Q5ZLS3"/>
<dbReference type="FunCoup" id="Q5ZLS3">
    <property type="interactions" value="2011"/>
</dbReference>
<dbReference type="STRING" id="9031.ENSGALP00000073707"/>
<dbReference type="PaxDb" id="9031-ENSGALP00000025019"/>
<dbReference type="GeneID" id="427310"/>
<dbReference type="KEGG" id="gga:427310"/>
<dbReference type="CTD" id="56254"/>
<dbReference type="VEuPathDB" id="HostDB:geneid_427310"/>
<dbReference type="eggNOG" id="KOG0978">
    <property type="taxonomic scope" value="Eukaryota"/>
</dbReference>
<dbReference type="InParanoid" id="Q5ZLS3"/>
<dbReference type="OrthoDB" id="10266039at2759"/>
<dbReference type="PhylomeDB" id="Q5ZLS3"/>
<dbReference type="UniPathway" id="UPA00143"/>
<dbReference type="PRO" id="PR:Q5ZLS3"/>
<dbReference type="Proteomes" id="UP000000539">
    <property type="component" value="Unassembled WGS sequence"/>
</dbReference>
<dbReference type="GO" id="GO:0033503">
    <property type="term" value="C:HULC complex"/>
    <property type="evidence" value="ECO:0000250"/>
    <property type="project" value="UniProtKB"/>
</dbReference>
<dbReference type="GO" id="GO:0005634">
    <property type="term" value="C:nucleus"/>
    <property type="evidence" value="ECO:0000318"/>
    <property type="project" value="GO_Central"/>
</dbReference>
<dbReference type="GO" id="GO:0061630">
    <property type="term" value="F:ubiquitin protein ligase activity"/>
    <property type="evidence" value="ECO:0000318"/>
    <property type="project" value="GO_Central"/>
</dbReference>
<dbReference type="GO" id="GO:0008270">
    <property type="term" value="F:zinc ion binding"/>
    <property type="evidence" value="ECO:0007669"/>
    <property type="project" value="UniProtKB-KW"/>
</dbReference>
<dbReference type="GO" id="GO:0006325">
    <property type="term" value="P:chromatin organization"/>
    <property type="evidence" value="ECO:0007669"/>
    <property type="project" value="UniProtKB-KW"/>
</dbReference>
<dbReference type="GO" id="GO:0016567">
    <property type="term" value="P:protein ubiquitination"/>
    <property type="evidence" value="ECO:0007669"/>
    <property type="project" value="UniProtKB-UniPathway"/>
</dbReference>
<dbReference type="CDD" id="cd16814">
    <property type="entry name" value="RING-HC_RNF20"/>
    <property type="match status" value="1"/>
</dbReference>
<dbReference type="FunFam" id="3.30.40.10:FF:000040">
    <property type="entry name" value="E3 ubiquitin protein ligase"/>
    <property type="match status" value="1"/>
</dbReference>
<dbReference type="Gene3D" id="3.30.40.10">
    <property type="entry name" value="Zinc/RING finger domain, C3HC4 (zinc finger)"/>
    <property type="match status" value="1"/>
</dbReference>
<dbReference type="InterPro" id="IPR013956">
    <property type="entry name" value="E3_ubiquit_lig_Bre1"/>
</dbReference>
<dbReference type="InterPro" id="IPR018957">
    <property type="entry name" value="Znf_C3HC4_RING-type"/>
</dbReference>
<dbReference type="InterPro" id="IPR001841">
    <property type="entry name" value="Znf_RING"/>
</dbReference>
<dbReference type="InterPro" id="IPR013083">
    <property type="entry name" value="Znf_RING/FYVE/PHD"/>
</dbReference>
<dbReference type="InterPro" id="IPR017907">
    <property type="entry name" value="Znf_RING_CS"/>
</dbReference>
<dbReference type="PANTHER" id="PTHR23163:SF2">
    <property type="entry name" value="E3 UBIQUITIN-PROTEIN LIGASE BRE1A"/>
    <property type="match status" value="1"/>
</dbReference>
<dbReference type="PANTHER" id="PTHR23163">
    <property type="entry name" value="RING FINGER PROTEIN-RELATED"/>
    <property type="match status" value="1"/>
</dbReference>
<dbReference type="Pfam" id="PF00097">
    <property type="entry name" value="zf-C3HC4"/>
    <property type="match status" value="1"/>
</dbReference>
<dbReference type="SMART" id="SM00184">
    <property type="entry name" value="RING"/>
    <property type="match status" value="1"/>
</dbReference>
<dbReference type="SUPFAM" id="SSF57850">
    <property type="entry name" value="RING/U-box"/>
    <property type="match status" value="1"/>
</dbReference>
<dbReference type="PROSITE" id="PS00518">
    <property type="entry name" value="ZF_RING_1"/>
    <property type="match status" value="1"/>
</dbReference>
<dbReference type="PROSITE" id="PS50089">
    <property type="entry name" value="ZF_RING_2"/>
    <property type="match status" value="1"/>
</dbReference>
<reference key="1">
    <citation type="journal article" date="2005" name="Genome Biol.">
        <title>Full-length cDNAs from chicken bursal lymphocytes to facilitate gene function analysis.</title>
        <authorList>
            <person name="Caldwell R.B."/>
            <person name="Kierzek A.M."/>
            <person name="Arakawa H."/>
            <person name="Bezzubov Y."/>
            <person name="Zaim J."/>
            <person name="Fiedler P."/>
            <person name="Kutter S."/>
            <person name="Blagodatski A."/>
            <person name="Kostovska D."/>
            <person name="Koter M."/>
            <person name="Plachy J."/>
            <person name="Carninci P."/>
            <person name="Hayashizaki Y."/>
            <person name="Buerstedde J.-M."/>
        </authorList>
    </citation>
    <scope>NUCLEOTIDE SEQUENCE [LARGE SCALE MRNA]</scope>
    <source>
        <strain>CB</strain>
        <tissue>Bursa of Fabricius</tissue>
    </source>
</reference>
<feature type="chain" id="PRO_0000055838" description="E3 ubiquitin-protein ligase BRE1A">
    <location>
        <begin position="1"/>
        <end position="984"/>
    </location>
</feature>
<feature type="zinc finger region" description="RING-type" evidence="3">
    <location>
        <begin position="931"/>
        <end position="970"/>
    </location>
</feature>
<feature type="region of interest" description="Disordered" evidence="4">
    <location>
        <begin position="1"/>
        <end position="34"/>
    </location>
</feature>
<feature type="region of interest" description="Disordered" evidence="4">
    <location>
        <begin position="128"/>
        <end position="150"/>
    </location>
</feature>
<feature type="region of interest" description="Disordered" evidence="4">
    <location>
        <begin position="506"/>
        <end position="632"/>
    </location>
</feature>
<feature type="coiled-coil region" evidence="2">
    <location>
        <begin position="43"/>
        <end position="90"/>
    </location>
</feature>
<feature type="coiled-coil region" evidence="2">
    <location>
        <begin position="236"/>
        <end position="378"/>
    </location>
</feature>
<feature type="coiled-coil region" evidence="2">
    <location>
        <begin position="429"/>
        <end position="907"/>
    </location>
</feature>
<feature type="compositionally biased region" description="Basic and acidic residues" evidence="4">
    <location>
        <begin position="139"/>
        <end position="150"/>
    </location>
</feature>
<feature type="compositionally biased region" description="Polar residues" evidence="4">
    <location>
        <begin position="514"/>
        <end position="526"/>
    </location>
</feature>
<feature type="compositionally biased region" description="Basic and acidic residues" evidence="4">
    <location>
        <begin position="527"/>
        <end position="540"/>
    </location>
</feature>
<feature type="compositionally biased region" description="Basic and acidic residues" evidence="4">
    <location>
        <begin position="558"/>
        <end position="632"/>
    </location>
</feature>
<organism>
    <name type="scientific">Gallus gallus</name>
    <name type="common">Chicken</name>
    <dbReference type="NCBI Taxonomy" id="9031"/>
    <lineage>
        <taxon>Eukaryota</taxon>
        <taxon>Metazoa</taxon>
        <taxon>Chordata</taxon>
        <taxon>Craniata</taxon>
        <taxon>Vertebrata</taxon>
        <taxon>Euteleostomi</taxon>
        <taxon>Archelosauria</taxon>
        <taxon>Archosauria</taxon>
        <taxon>Dinosauria</taxon>
        <taxon>Saurischia</taxon>
        <taxon>Theropoda</taxon>
        <taxon>Coelurosauria</taxon>
        <taxon>Aves</taxon>
        <taxon>Neognathae</taxon>
        <taxon>Galloanserae</taxon>
        <taxon>Galliformes</taxon>
        <taxon>Phasianidae</taxon>
        <taxon>Phasianinae</taxon>
        <taxon>Gallus</taxon>
    </lineage>
</organism>
<keyword id="KW-0156">Chromatin regulator</keyword>
<keyword id="KW-0175">Coiled coil</keyword>
<keyword id="KW-0479">Metal-binding</keyword>
<keyword id="KW-0539">Nucleus</keyword>
<keyword id="KW-1185">Reference proteome</keyword>
<keyword id="KW-0808">Transferase</keyword>
<keyword id="KW-0833">Ubl conjugation pathway</keyword>
<keyword id="KW-0862">Zinc</keyword>
<keyword id="KW-0863">Zinc-finger</keyword>
<comment type="function">
    <text evidence="1">Component of the RNF20/40 E3 ubiquitin-protein ligase complex that mediates monoubiquitination of 'Lys-120' of histone H2B (H2BK120ub1). H2BK120ub1 gives a specific tag for epigenetic transcriptional activation and is also prerequisite for histone H3 'Lys-4' and 'Lys-79' methylation (H3K4me and H3K79me, respectively).</text>
</comment>
<comment type="catalytic activity">
    <reaction evidence="1">
        <text>S-ubiquitinyl-[E2 ubiquitin-conjugating enzyme]-L-cysteine + [acceptor protein]-L-lysine = [E2 ubiquitin-conjugating enzyme]-L-cysteine + N(6)-ubiquitinyl-[acceptor protein]-L-lysine.</text>
        <dbReference type="EC" id="2.3.2.27"/>
    </reaction>
</comment>
<comment type="pathway">
    <text>Protein modification; protein ubiquitination.</text>
</comment>
<comment type="subunit">
    <text evidence="1">Component of the RNF20/40 complex (also known as BRE1 complex).</text>
</comment>
<comment type="subcellular location">
    <subcellularLocation>
        <location evidence="1">Nucleus</location>
    </subcellularLocation>
</comment>
<comment type="similarity">
    <text evidence="5">Belongs to the BRE1 family.</text>
</comment>
<protein>
    <recommendedName>
        <fullName>E3 ubiquitin-protein ligase BRE1A</fullName>
        <shortName>BRE1-A</shortName>
        <ecNumber evidence="1">2.3.2.27</ecNumber>
    </recommendedName>
    <alternativeName>
        <fullName>RING finger protein 20</fullName>
    </alternativeName>
    <alternativeName>
        <fullName evidence="5">RING-type E3 ubiquitin transferase BRE1A</fullName>
    </alternativeName>
</protein>